<dbReference type="EC" id="2.7.7.-" evidence="1"/>
<dbReference type="EC" id="2.7.7.108" evidence="1"/>
<dbReference type="EMBL" id="AE016879">
    <property type="protein sequence ID" value="AAP27325.1"/>
    <property type="molecule type" value="Genomic_DNA"/>
</dbReference>
<dbReference type="EMBL" id="AE017334">
    <property type="protein sequence ID" value="AAT32675.1"/>
    <property type="molecule type" value="Genomic_DNA"/>
</dbReference>
<dbReference type="EMBL" id="AE017225">
    <property type="protein sequence ID" value="AAT55615.1"/>
    <property type="molecule type" value="Genomic_DNA"/>
</dbReference>
<dbReference type="RefSeq" id="NP_845839.1">
    <property type="nucleotide sequence ID" value="NC_003997.3"/>
</dbReference>
<dbReference type="RefSeq" id="WP_000164886.1">
    <property type="nucleotide sequence ID" value="NZ_WXXJ01000029.1"/>
</dbReference>
<dbReference type="RefSeq" id="YP_029564.1">
    <property type="nucleotide sequence ID" value="NC_005945.1"/>
</dbReference>
<dbReference type="SMR" id="Q81YI0"/>
<dbReference type="STRING" id="261594.GBAA_3567"/>
<dbReference type="DNASU" id="1083912"/>
<dbReference type="GeneID" id="45023301"/>
<dbReference type="KEGG" id="ban:BA_3567"/>
<dbReference type="KEGG" id="banh:HYU01_17455"/>
<dbReference type="KEGG" id="bar:GBAA_3567"/>
<dbReference type="KEGG" id="bat:BAS3307"/>
<dbReference type="PATRIC" id="fig|198094.11.peg.3540"/>
<dbReference type="eggNOG" id="COG0397">
    <property type="taxonomic scope" value="Bacteria"/>
</dbReference>
<dbReference type="HOGENOM" id="CLU_010245_4_1_9"/>
<dbReference type="OMA" id="YGPYGWL"/>
<dbReference type="OrthoDB" id="9773505at2"/>
<dbReference type="Proteomes" id="UP000000427">
    <property type="component" value="Chromosome"/>
</dbReference>
<dbReference type="Proteomes" id="UP000000594">
    <property type="component" value="Chromosome"/>
</dbReference>
<dbReference type="GO" id="GO:0070733">
    <property type="term" value="F:AMPylase activity"/>
    <property type="evidence" value="ECO:0007669"/>
    <property type="project" value="RHEA"/>
</dbReference>
<dbReference type="GO" id="GO:0005524">
    <property type="term" value="F:ATP binding"/>
    <property type="evidence" value="ECO:0007669"/>
    <property type="project" value="UniProtKB-UniRule"/>
</dbReference>
<dbReference type="GO" id="GO:0000287">
    <property type="term" value="F:magnesium ion binding"/>
    <property type="evidence" value="ECO:0007669"/>
    <property type="project" value="UniProtKB-UniRule"/>
</dbReference>
<dbReference type="HAMAP" id="MF_00692">
    <property type="entry name" value="YdiU_SelO"/>
    <property type="match status" value="1"/>
</dbReference>
<dbReference type="InterPro" id="IPR003846">
    <property type="entry name" value="SelO"/>
</dbReference>
<dbReference type="NCBIfam" id="NF000658">
    <property type="entry name" value="PRK00029.1"/>
    <property type="match status" value="1"/>
</dbReference>
<dbReference type="PANTHER" id="PTHR32057">
    <property type="entry name" value="PROTEIN ADENYLYLTRANSFERASE SELO, MITOCHONDRIAL"/>
    <property type="match status" value="1"/>
</dbReference>
<dbReference type="PANTHER" id="PTHR32057:SF14">
    <property type="entry name" value="PROTEIN ADENYLYLTRANSFERASE SELO, MITOCHONDRIAL"/>
    <property type="match status" value="1"/>
</dbReference>
<dbReference type="Pfam" id="PF02696">
    <property type="entry name" value="SelO"/>
    <property type="match status" value="1"/>
</dbReference>
<feature type="chain" id="PRO_0000121405" description="Protein nucleotidyltransferase YdiU">
    <location>
        <begin position="1"/>
        <end position="488"/>
    </location>
</feature>
<feature type="region of interest" description="Disordered" evidence="2">
    <location>
        <begin position="108"/>
        <end position="127"/>
    </location>
</feature>
<feature type="active site" description="Proton acceptor" evidence="1">
    <location>
        <position position="253"/>
    </location>
</feature>
<feature type="binding site" evidence="1">
    <location>
        <position position="91"/>
    </location>
    <ligand>
        <name>ATP</name>
        <dbReference type="ChEBI" id="CHEBI:30616"/>
    </ligand>
</feature>
<feature type="binding site" evidence="1">
    <location>
        <position position="93"/>
    </location>
    <ligand>
        <name>ATP</name>
        <dbReference type="ChEBI" id="CHEBI:30616"/>
    </ligand>
</feature>
<feature type="binding site" evidence="1">
    <location>
        <position position="94"/>
    </location>
    <ligand>
        <name>ATP</name>
        <dbReference type="ChEBI" id="CHEBI:30616"/>
    </ligand>
</feature>
<feature type="binding site" evidence="1">
    <location>
        <position position="114"/>
    </location>
    <ligand>
        <name>ATP</name>
        <dbReference type="ChEBI" id="CHEBI:30616"/>
    </ligand>
</feature>
<feature type="binding site" evidence="1">
    <location>
        <position position="126"/>
    </location>
    <ligand>
        <name>ATP</name>
        <dbReference type="ChEBI" id="CHEBI:30616"/>
    </ligand>
</feature>
<feature type="binding site" evidence="1">
    <location>
        <position position="127"/>
    </location>
    <ligand>
        <name>ATP</name>
        <dbReference type="ChEBI" id="CHEBI:30616"/>
    </ligand>
</feature>
<feature type="binding site" evidence="1">
    <location>
        <position position="177"/>
    </location>
    <ligand>
        <name>ATP</name>
        <dbReference type="ChEBI" id="CHEBI:30616"/>
    </ligand>
</feature>
<feature type="binding site" evidence="1">
    <location>
        <position position="184"/>
    </location>
    <ligand>
        <name>ATP</name>
        <dbReference type="ChEBI" id="CHEBI:30616"/>
    </ligand>
</feature>
<feature type="binding site" evidence="1">
    <location>
        <position position="254"/>
    </location>
    <ligand>
        <name>Mg(2+)</name>
        <dbReference type="ChEBI" id="CHEBI:18420"/>
    </ligand>
</feature>
<feature type="binding site" evidence="1">
    <location>
        <position position="263"/>
    </location>
    <ligand>
        <name>ATP</name>
        <dbReference type="ChEBI" id="CHEBI:30616"/>
    </ligand>
</feature>
<feature type="binding site" evidence="1">
    <location>
        <position position="263"/>
    </location>
    <ligand>
        <name>Mg(2+)</name>
        <dbReference type="ChEBI" id="CHEBI:18420"/>
    </ligand>
</feature>
<comment type="function">
    <text evidence="1">Nucleotidyltransferase involved in the post-translational modification of proteins. It can catalyze the addition of adenosine monophosphate (AMP) or uridine monophosphate (UMP) to a protein, resulting in modifications known as AMPylation and UMPylation.</text>
</comment>
<comment type="catalytic activity">
    <reaction evidence="1">
        <text>L-seryl-[protein] + ATP = 3-O-(5'-adenylyl)-L-seryl-[protein] + diphosphate</text>
        <dbReference type="Rhea" id="RHEA:58120"/>
        <dbReference type="Rhea" id="RHEA-COMP:9863"/>
        <dbReference type="Rhea" id="RHEA-COMP:15073"/>
        <dbReference type="ChEBI" id="CHEBI:29999"/>
        <dbReference type="ChEBI" id="CHEBI:30616"/>
        <dbReference type="ChEBI" id="CHEBI:33019"/>
        <dbReference type="ChEBI" id="CHEBI:142516"/>
        <dbReference type="EC" id="2.7.7.108"/>
    </reaction>
</comment>
<comment type="catalytic activity">
    <reaction evidence="1">
        <text>L-threonyl-[protein] + ATP = 3-O-(5'-adenylyl)-L-threonyl-[protein] + diphosphate</text>
        <dbReference type="Rhea" id="RHEA:54292"/>
        <dbReference type="Rhea" id="RHEA-COMP:11060"/>
        <dbReference type="Rhea" id="RHEA-COMP:13847"/>
        <dbReference type="ChEBI" id="CHEBI:30013"/>
        <dbReference type="ChEBI" id="CHEBI:30616"/>
        <dbReference type="ChEBI" id="CHEBI:33019"/>
        <dbReference type="ChEBI" id="CHEBI:138113"/>
        <dbReference type="EC" id="2.7.7.108"/>
    </reaction>
</comment>
<comment type="catalytic activity">
    <reaction evidence="1">
        <text>L-tyrosyl-[protein] + ATP = O-(5'-adenylyl)-L-tyrosyl-[protein] + diphosphate</text>
        <dbReference type="Rhea" id="RHEA:54288"/>
        <dbReference type="Rhea" id="RHEA-COMP:10136"/>
        <dbReference type="Rhea" id="RHEA-COMP:13846"/>
        <dbReference type="ChEBI" id="CHEBI:30616"/>
        <dbReference type="ChEBI" id="CHEBI:33019"/>
        <dbReference type="ChEBI" id="CHEBI:46858"/>
        <dbReference type="ChEBI" id="CHEBI:83624"/>
        <dbReference type="EC" id="2.7.7.108"/>
    </reaction>
</comment>
<comment type="catalytic activity">
    <reaction evidence="1">
        <text>L-histidyl-[protein] + UTP = N(tele)-(5'-uridylyl)-L-histidyl-[protein] + diphosphate</text>
        <dbReference type="Rhea" id="RHEA:83891"/>
        <dbReference type="Rhea" id="RHEA-COMP:9745"/>
        <dbReference type="Rhea" id="RHEA-COMP:20239"/>
        <dbReference type="ChEBI" id="CHEBI:29979"/>
        <dbReference type="ChEBI" id="CHEBI:33019"/>
        <dbReference type="ChEBI" id="CHEBI:46398"/>
        <dbReference type="ChEBI" id="CHEBI:233474"/>
    </reaction>
</comment>
<comment type="catalytic activity">
    <reaction evidence="1">
        <text>L-seryl-[protein] + UTP = O-(5'-uridylyl)-L-seryl-[protein] + diphosphate</text>
        <dbReference type="Rhea" id="RHEA:64604"/>
        <dbReference type="Rhea" id="RHEA-COMP:9863"/>
        <dbReference type="Rhea" id="RHEA-COMP:16635"/>
        <dbReference type="ChEBI" id="CHEBI:29999"/>
        <dbReference type="ChEBI" id="CHEBI:33019"/>
        <dbReference type="ChEBI" id="CHEBI:46398"/>
        <dbReference type="ChEBI" id="CHEBI:156051"/>
    </reaction>
</comment>
<comment type="catalytic activity">
    <reaction evidence="1">
        <text>L-tyrosyl-[protein] + UTP = O-(5'-uridylyl)-L-tyrosyl-[protein] + diphosphate</text>
        <dbReference type="Rhea" id="RHEA:83887"/>
        <dbReference type="Rhea" id="RHEA-COMP:10136"/>
        <dbReference type="Rhea" id="RHEA-COMP:20238"/>
        <dbReference type="ChEBI" id="CHEBI:33019"/>
        <dbReference type="ChEBI" id="CHEBI:46398"/>
        <dbReference type="ChEBI" id="CHEBI:46858"/>
        <dbReference type="ChEBI" id="CHEBI:90602"/>
    </reaction>
</comment>
<comment type="cofactor">
    <cofactor evidence="1">
        <name>Mg(2+)</name>
        <dbReference type="ChEBI" id="CHEBI:18420"/>
    </cofactor>
    <cofactor evidence="1">
        <name>Mn(2+)</name>
        <dbReference type="ChEBI" id="CHEBI:29035"/>
    </cofactor>
</comment>
<comment type="similarity">
    <text evidence="1">Belongs to the SELO family.</text>
</comment>
<protein>
    <recommendedName>
        <fullName evidence="1">Protein nucleotidyltransferase YdiU</fullName>
        <ecNumber evidence="1">2.7.7.-</ecNumber>
    </recommendedName>
    <alternativeName>
        <fullName evidence="1">Protein adenylyltransferase YdiU</fullName>
        <ecNumber evidence="1">2.7.7.108</ecNumber>
    </alternativeName>
    <alternativeName>
        <fullName evidence="1">Protein uridylyltransferase YdiU</fullName>
        <ecNumber evidence="1">2.7.7.-</ecNumber>
    </alternativeName>
</protein>
<evidence type="ECO:0000255" key="1">
    <source>
        <dbReference type="HAMAP-Rule" id="MF_00692"/>
    </source>
</evidence>
<evidence type="ECO:0000256" key="2">
    <source>
        <dbReference type="SAM" id="MobiDB-lite"/>
    </source>
</evidence>
<organism>
    <name type="scientific">Bacillus anthracis</name>
    <dbReference type="NCBI Taxonomy" id="1392"/>
    <lineage>
        <taxon>Bacteria</taxon>
        <taxon>Bacillati</taxon>
        <taxon>Bacillota</taxon>
        <taxon>Bacilli</taxon>
        <taxon>Bacillales</taxon>
        <taxon>Bacillaceae</taxon>
        <taxon>Bacillus</taxon>
        <taxon>Bacillus cereus group</taxon>
    </lineage>
</organism>
<accession>Q81YI0</accession>
<accession>Q6HVS4</accession>
<accession>Q6KPZ0</accession>
<proteinExistence type="inferred from homology"/>
<gene>
    <name evidence="1" type="primary">ydiU</name>
    <name evidence="1" type="synonym">selO</name>
    <name type="ordered locus">BA_3567</name>
    <name type="ordered locus">GBAA_3567</name>
    <name type="ordered locus">BAS3307</name>
</gene>
<keyword id="KW-0067">ATP-binding</keyword>
<keyword id="KW-0460">Magnesium</keyword>
<keyword id="KW-0464">Manganese</keyword>
<keyword id="KW-0479">Metal-binding</keyword>
<keyword id="KW-0547">Nucleotide-binding</keyword>
<keyword id="KW-0548">Nucleotidyltransferase</keyword>
<keyword id="KW-1185">Reference proteome</keyword>
<keyword id="KW-0808">Transferase</keyword>
<sequence>MTKNNEAGWNLDHSYTTLPQSFYTEIPPTPVSSPELVKLNHSLAISLGFNPEELKKEAEIAIFAGNALPEGAHPLAQAYAGHQFGHFNMLGDGRALLIGEQMTPSGKRFDIQLKGSGPTPYSRRGDGRAALGPMLREYIISEAMYALDIPTTRSLAVVTTGEPTYRETKLPGAILTRVASSHIRVGTFQYAAARGSIEDLQSLADYTIKRHYPEIEAHENRYTALLQEVIKKQASLIAKWQLVGFIHGVMNTDNITISGETIDYGPCAFMDNYDQGTVFSSIDTQGRYAYGNQPYMAAWDLARLAESLIPILHEDEEEVLKIAQDEISKFSVQYEKQWFLGMKKKLGLFSNEEQDQSLIEQLLKMMEKFKADYTNTFRSLTLNTIENTALFESPEFKEWYKLWQSRLERQEESKENAYEMMKNNNPSIIPRNHRVEEALEAAVTNGDYSVMEKLLEALSNPYAYATEQEEYCVPPVPTNRPYRTFCGT</sequence>
<name>SELO_BACAN</name>
<reference key="1">
    <citation type="journal article" date="2003" name="Nature">
        <title>The genome sequence of Bacillus anthracis Ames and comparison to closely related bacteria.</title>
        <authorList>
            <person name="Read T.D."/>
            <person name="Peterson S.N."/>
            <person name="Tourasse N.J."/>
            <person name="Baillie L.W."/>
            <person name="Paulsen I.T."/>
            <person name="Nelson K.E."/>
            <person name="Tettelin H."/>
            <person name="Fouts D.E."/>
            <person name="Eisen J.A."/>
            <person name="Gill S.R."/>
            <person name="Holtzapple E.K."/>
            <person name="Okstad O.A."/>
            <person name="Helgason E."/>
            <person name="Rilstone J."/>
            <person name="Wu M."/>
            <person name="Kolonay J.F."/>
            <person name="Beanan M.J."/>
            <person name="Dodson R.J."/>
            <person name="Brinkac L.M."/>
            <person name="Gwinn M.L."/>
            <person name="DeBoy R.T."/>
            <person name="Madpu R."/>
            <person name="Daugherty S.C."/>
            <person name="Durkin A.S."/>
            <person name="Haft D.H."/>
            <person name="Nelson W.C."/>
            <person name="Peterson J.D."/>
            <person name="Pop M."/>
            <person name="Khouri H.M."/>
            <person name="Radune D."/>
            <person name="Benton J.L."/>
            <person name="Mahamoud Y."/>
            <person name="Jiang L."/>
            <person name="Hance I.R."/>
            <person name="Weidman J.F."/>
            <person name="Berry K.J."/>
            <person name="Plaut R.D."/>
            <person name="Wolf A.M."/>
            <person name="Watkins K.L."/>
            <person name="Nierman W.C."/>
            <person name="Hazen A."/>
            <person name="Cline R.T."/>
            <person name="Redmond C."/>
            <person name="Thwaite J.E."/>
            <person name="White O."/>
            <person name="Salzberg S.L."/>
            <person name="Thomason B."/>
            <person name="Friedlander A.M."/>
            <person name="Koehler T.M."/>
            <person name="Hanna P.C."/>
            <person name="Kolstoe A.-B."/>
            <person name="Fraser C.M."/>
        </authorList>
    </citation>
    <scope>NUCLEOTIDE SEQUENCE [LARGE SCALE GENOMIC DNA]</scope>
    <source>
        <strain>Ames / isolate Porton</strain>
    </source>
</reference>
<reference key="2">
    <citation type="journal article" date="2009" name="J. Bacteriol.">
        <title>The complete genome sequence of Bacillus anthracis Ames 'Ancestor'.</title>
        <authorList>
            <person name="Ravel J."/>
            <person name="Jiang L."/>
            <person name="Stanley S.T."/>
            <person name="Wilson M.R."/>
            <person name="Decker R.S."/>
            <person name="Read T.D."/>
            <person name="Worsham P."/>
            <person name="Keim P.S."/>
            <person name="Salzberg S.L."/>
            <person name="Fraser-Liggett C.M."/>
            <person name="Rasko D.A."/>
        </authorList>
    </citation>
    <scope>NUCLEOTIDE SEQUENCE [LARGE SCALE GENOMIC DNA]</scope>
    <source>
        <strain>Ames ancestor</strain>
    </source>
</reference>
<reference key="3">
    <citation type="submission" date="2004-01" db="EMBL/GenBank/DDBJ databases">
        <title>Complete genome sequence of Bacillus anthracis Sterne.</title>
        <authorList>
            <person name="Brettin T.S."/>
            <person name="Bruce D."/>
            <person name="Challacombe J.F."/>
            <person name="Gilna P."/>
            <person name="Han C."/>
            <person name="Hill K."/>
            <person name="Hitchcock P."/>
            <person name="Jackson P."/>
            <person name="Keim P."/>
            <person name="Longmire J."/>
            <person name="Lucas S."/>
            <person name="Okinaka R."/>
            <person name="Richardson P."/>
            <person name="Rubin E."/>
            <person name="Tice H."/>
        </authorList>
    </citation>
    <scope>NUCLEOTIDE SEQUENCE [LARGE SCALE GENOMIC DNA]</scope>
    <source>
        <strain>Sterne</strain>
    </source>
</reference>